<evidence type="ECO:0000255" key="1">
    <source>
        <dbReference type="HAMAP-Rule" id="MF_00563"/>
    </source>
</evidence>
<keyword id="KW-0963">Cytoplasm</keyword>
<keyword id="KW-0378">Hydrolase</keyword>
<keyword id="KW-0520">NAD</keyword>
<keyword id="KW-0554">One-carbon metabolism</keyword>
<gene>
    <name evidence="1" type="primary">ahcY</name>
    <name type="ordered locus">Pnec_1718</name>
</gene>
<comment type="function">
    <text evidence="1">May play a key role in the regulation of the intracellular concentration of adenosylhomocysteine.</text>
</comment>
<comment type="catalytic activity">
    <reaction evidence="1">
        <text>S-adenosyl-L-homocysteine + H2O = L-homocysteine + adenosine</text>
        <dbReference type="Rhea" id="RHEA:21708"/>
        <dbReference type="ChEBI" id="CHEBI:15377"/>
        <dbReference type="ChEBI" id="CHEBI:16335"/>
        <dbReference type="ChEBI" id="CHEBI:57856"/>
        <dbReference type="ChEBI" id="CHEBI:58199"/>
        <dbReference type="EC" id="3.13.2.1"/>
    </reaction>
</comment>
<comment type="cofactor">
    <cofactor evidence="1">
        <name>NAD(+)</name>
        <dbReference type="ChEBI" id="CHEBI:57540"/>
    </cofactor>
    <text evidence="1">Binds 1 NAD(+) per subunit.</text>
</comment>
<comment type="pathway">
    <text evidence="1">Amino-acid biosynthesis; L-homocysteine biosynthesis; L-homocysteine from S-adenosyl-L-homocysteine: step 1/1.</text>
</comment>
<comment type="subcellular location">
    <subcellularLocation>
        <location evidence="1">Cytoplasm</location>
    </subcellularLocation>
</comment>
<comment type="similarity">
    <text evidence="1">Belongs to the adenosylhomocysteinase family.</text>
</comment>
<dbReference type="EC" id="3.13.2.1" evidence="1"/>
<dbReference type="EMBL" id="CP001010">
    <property type="protein sequence ID" value="ACB44777.1"/>
    <property type="molecule type" value="Genomic_DNA"/>
</dbReference>
<dbReference type="SMR" id="B1XSH8"/>
<dbReference type="STRING" id="452638.Pnec_1718"/>
<dbReference type="KEGG" id="pne:Pnec_1718"/>
<dbReference type="eggNOG" id="COG0499">
    <property type="taxonomic scope" value="Bacteria"/>
</dbReference>
<dbReference type="HOGENOM" id="CLU_025194_2_1_4"/>
<dbReference type="OrthoDB" id="9802717at2"/>
<dbReference type="UniPathway" id="UPA00314">
    <property type="reaction ID" value="UER00076"/>
</dbReference>
<dbReference type="GO" id="GO:0005829">
    <property type="term" value="C:cytosol"/>
    <property type="evidence" value="ECO:0007669"/>
    <property type="project" value="TreeGrafter"/>
</dbReference>
<dbReference type="GO" id="GO:0004013">
    <property type="term" value="F:adenosylhomocysteinase activity"/>
    <property type="evidence" value="ECO:0007669"/>
    <property type="project" value="UniProtKB-UniRule"/>
</dbReference>
<dbReference type="GO" id="GO:0071269">
    <property type="term" value="P:L-homocysteine biosynthetic process"/>
    <property type="evidence" value="ECO:0007669"/>
    <property type="project" value="UniProtKB-UniRule"/>
</dbReference>
<dbReference type="GO" id="GO:0006730">
    <property type="term" value="P:one-carbon metabolic process"/>
    <property type="evidence" value="ECO:0007669"/>
    <property type="project" value="UniProtKB-KW"/>
</dbReference>
<dbReference type="GO" id="GO:0033353">
    <property type="term" value="P:S-adenosylmethionine cycle"/>
    <property type="evidence" value="ECO:0007669"/>
    <property type="project" value="TreeGrafter"/>
</dbReference>
<dbReference type="CDD" id="cd00401">
    <property type="entry name" value="SAHH"/>
    <property type="match status" value="1"/>
</dbReference>
<dbReference type="FunFam" id="3.40.50.720:FF:000004">
    <property type="entry name" value="Adenosylhomocysteinase"/>
    <property type="match status" value="1"/>
</dbReference>
<dbReference type="Gene3D" id="3.40.50.1480">
    <property type="entry name" value="Adenosylhomocysteinase-like"/>
    <property type="match status" value="1"/>
</dbReference>
<dbReference type="Gene3D" id="3.40.50.720">
    <property type="entry name" value="NAD(P)-binding Rossmann-like Domain"/>
    <property type="match status" value="1"/>
</dbReference>
<dbReference type="HAMAP" id="MF_00563">
    <property type="entry name" value="AdoHcyase"/>
    <property type="match status" value="1"/>
</dbReference>
<dbReference type="InterPro" id="IPR042172">
    <property type="entry name" value="Adenosylhomocyst_ase-like_sf"/>
</dbReference>
<dbReference type="InterPro" id="IPR000043">
    <property type="entry name" value="Adenosylhomocysteinase-like"/>
</dbReference>
<dbReference type="InterPro" id="IPR015878">
    <property type="entry name" value="Ado_hCys_hydrolase_NAD-bd"/>
</dbReference>
<dbReference type="InterPro" id="IPR036291">
    <property type="entry name" value="NAD(P)-bd_dom_sf"/>
</dbReference>
<dbReference type="InterPro" id="IPR020082">
    <property type="entry name" value="S-Ado-L-homoCys_hydrolase_CS"/>
</dbReference>
<dbReference type="NCBIfam" id="TIGR00936">
    <property type="entry name" value="ahcY"/>
    <property type="match status" value="1"/>
</dbReference>
<dbReference type="NCBIfam" id="NF004005">
    <property type="entry name" value="PRK05476.2-3"/>
    <property type="match status" value="1"/>
</dbReference>
<dbReference type="PANTHER" id="PTHR23420">
    <property type="entry name" value="ADENOSYLHOMOCYSTEINASE"/>
    <property type="match status" value="1"/>
</dbReference>
<dbReference type="PANTHER" id="PTHR23420:SF0">
    <property type="entry name" value="ADENOSYLHOMOCYSTEINASE"/>
    <property type="match status" value="1"/>
</dbReference>
<dbReference type="Pfam" id="PF05221">
    <property type="entry name" value="AdoHcyase"/>
    <property type="match status" value="1"/>
</dbReference>
<dbReference type="Pfam" id="PF00670">
    <property type="entry name" value="AdoHcyase_NAD"/>
    <property type="match status" value="1"/>
</dbReference>
<dbReference type="PIRSF" id="PIRSF001109">
    <property type="entry name" value="Ad_hcy_hydrolase"/>
    <property type="match status" value="1"/>
</dbReference>
<dbReference type="SMART" id="SM00996">
    <property type="entry name" value="AdoHcyase"/>
    <property type="match status" value="1"/>
</dbReference>
<dbReference type="SMART" id="SM00997">
    <property type="entry name" value="AdoHcyase_NAD"/>
    <property type="match status" value="1"/>
</dbReference>
<dbReference type="SUPFAM" id="SSF52283">
    <property type="entry name" value="Formate/glycerate dehydrogenase catalytic domain-like"/>
    <property type="match status" value="1"/>
</dbReference>
<dbReference type="SUPFAM" id="SSF51735">
    <property type="entry name" value="NAD(P)-binding Rossmann-fold domains"/>
    <property type="match status" value="1"/>
</dbReference>
<dbReference type="PROSITE" id="PS00738">
    <property type="entry name" value="ADOHCYASE_1"/>
    <property type="match status" value="1"/>
</dbReference>
<dbReference type="PROSITE" id="PS00739">
    <property type="entry name" value="ADOHCYASE_2"/>
    <property type="match status" value="1"/>
</dbReference>
<proteinExistence type="inferred from homology"/>
<feature type="chain" id="PRO_1000129292" description="Adenosylhomocysteinase">
    <location>
        <begin position="1"/>
        <end position="481"/>
    </location>
</feature>
<feature type="binding site" evidence="1">
    <location>
        <position position="65"/>
    </location>
    <ligand>
        <name>substrate</name>
    </ligand>
</feature>
<feature type="binding site" evidence="1">
    <location>
        <position position="140"/>
    </location>
    <ligand>
        <name>substrate</name>
    </ligand>
</feature>
<feature type="binding site" evidence="1">
    <location>
        <position position="200"/>
    </location>
    <ligand>
        <name>substrate</name>
    </ligand>
</feature>
<feature type="binding site" evidence="1">
    <location>
        <begin position="201"/>
        <end position="203"/>
    </location>
    <ligand>
        <name>NAD(+)</name>
        <dbReference type="ChEBI" id="CHEBI:57540"/>
    </ligand>
</feature>
<feature type="binding site" evidence="1">
    <location>
        <position position="230"/>
    </location>
    <ligand>
        <name>substrate</name>
    </ligand>
</feature>
<feature type="binding site" evidence="1">
    <location>
        <position position="234"/>
    </location>
    <ligand>
        <name>substrate</name>
    </ligand>
</feature>
<feature type="binding site" evidence="1">
    <location>
        <position position="235"/>
    </location>
    <ligand>
        <name>NAD(+)</name>
        <dbReference type="ChEBI" id="CHEBI:57540"/>
    </ligand>
</feature>
<feature type="binding site" evidence="1">
    <location>
        <begin position="264"/>
        <end position="269"/>
    </location>
    <ligand>
        <name>NAD(+)</name>
        <dbReference type="ChEBI" id="CHEBI:57540"/>
    </ligand>
</feature>
<feature type="binding site" evidence="1">
    <location>
        <position position="287"/>
    </location>
    <ligand>
        <name>NAD(+)</name>
        <dbReference type="ChEBI" id="CHEBI:57540"/>
    </ligand>
</feature>
<feature type="binding site" evidence="1">
    <location>
        <position position="322"/>
    </location>
    <ligand>
        <name>NAD(+)</name>
        <dbReference type="ChEBI" id="CHEBI:57540"/>
    </ligand>
</feature>
<feature type="binding site" evidence="1">
    <location>
        <begin position="343"/>
        <end position="345"/>
    </location>
    <ligand>
        <name>NAD(+)</name>
        <dbReference type="ChEBI" id="CHEBI:57540"/>
    </ligand>
</feature>
<feature type="binding site" evidence="1">
    <location>
        <position position="393"/>
    </location>
    <ligand>
        <name>NAD(+)</name>
        <dbReference type="ChEBI" id="CHEBI:57540"/>
    </ligand>
</feature>
<organism>
    <name type="scientific">Polynucleobacter necessarius subsp. necessarius (strain STIR1)</name>
    <dbReference type="NCBI Taxonomy" id="452638"/>
    <lineage>
        <taxon>Bacteria</taxon>
        <taxon>Pseudomonadati</taxon>
        <taxon>Pseudomonadota</taxon>
        <taxon>Betaproteobacteria</taxon>
        <taxon>Burkholderiales</taxon>
        <taxon>Burkholderiaceae</taxon>
        <taxon>Polynucleobacter</taxon>
    </lineage>
</organism>
<reference key="1">
    <citation type="journal article" date="2013" name="Proc. Natl. Acad. Sci. U.S.A.">
        <title>Polynucleobacter necessarius, a model for genome reduction in both free-living and symbiotic bacteria.</title>
        <authorList>
            <person name="Boscaro V."/>
            <person name="Felletti M."/>
            <person name="Vannini C."/>
            <person name="Ackerman M.S."/>
            <person name="Chain P.S."/>
            <person name="Malfatti S."/>
            <person name="Vergez L.M."/>
            <person name="Shin M."/>
            <person name="Doak T.G."/>
            <person name="Lynch M."/>
            <person name="Petroni G."/>
        </authorList>
    </citation>
    <scope>NUCLEOTIDE SEQUENCE [LARGE SCALE GENOMIC DNA]</scope>
    <source>
        <strain>STIR1</strain>
    </source>
</reference>
<name>SAHH_POLNS</name>
<sequence length="481" mass="52839">MNTVSDLSKFVATRCAIADISLADFGRKEIAIAETEMPGLIAIRDEFAAQQPLRGTRITGSLHMTIQTAVLIETLEALGAEVQWASCNIFSTQDHAAAAIAANGTPVFAIKGETLEQYWDFTHRIFEWADGGYTNMILDDGGDATLLLHLGARAEKDQACLNHPTSEEETILFAAIKNKLAQDPTWYSTRLEKVKGVTEETTTGVHRLYQMFARGDLKFPAINVNDSVTKSKFDNLYGCRESLVDAIKRATDVMVAGKVAVVCGYGDVGKGSAQALRALSAQVWVTEVDPICALQAAMEGYRVVTMDYAADKADIFVSATGNYHVITHDHMAKMKDQAIVCNIGHFDNEIDVAGIEKYKWEEIKPQVDHVIFPAANGMPEKRIIILAKGRLVNLGCGTGHPSYVMSSSFANQVIAQIELWNAVGTNKYPVGVYTLPKHLDEKVARLQLKKLNAQLTELTDQQAAYIGVTKEGPYKADHYRY</sequence>
<accession>B1XSH8</accession>
<protein>
    <recommendedName>
        <fullName evidence="1">Adenosylhomocysteinase</fullName>
        <ecNumber evidence="1">3.13.2.1</ecNumber>
    </recommendedName>
    <alternativeName>
        <fullName evidence="1">S-adenosyl-L-homocysteine hydrolase</fullName>
        <shortName evidence="1">AdoHcyase</shortName>
    </alternativeName>
</protein>